<proteinExistence type="evidence at transcript level"/>
<accession>A0A0B4I1L1</accession>
<sequence length="2157" mass="234311">MQPHRVFIFGDQTGGFATGLQQLLLDKTNPSLVYFVDHANLALRQELSRLPSTDRETLPLIGSVQDILTLHKKGERNVVIDSILSTVYHLTCFIYKYGNAGCPYPNGQDIHVTGICVGSLAAAAVSCSRSIGDVIVAGIVAIQAALRVGLRAHQAALLINNRAAPHTHWSYAVSTESLRLDLIKDALAKFAQDMDTSPLSHPYISAIGLDSVTVSGPPSQLHQFWRENTPSHKPIPIPIWAPYHGPHIFGDSDVETIIESLHPIPKLSQQAPLISSGSGVMASQTLADLIRAALQDILLHRLDLPALVGHIKDIFRSSPNQDFAMTPIATNAAAGLVAATAKAAGNTGSVDNEIMDAAALAGSASRATSAKTHDAKIAIIGMSGRFPEAADLDSFWSLLEQGVDAYRPVPPDRFDAHAHHDETGRRKNTSRVLGGCWINQPGLFDPKFFSISPKEAEQSDPAQRLALQTAYEALEMAGVVPDRTQSTQRDRVGVFYGMVSDDWREINSGQNIDTYFIPGGIRAFTPGRINYHFKFSGPSITVDTACSSSLAAIHVACNSLWRGDCDTAVAGGVNVLTNPDIFAGLDRGHFLSTTGNCKTFDDDADGYCRADGVGTVILKRLEDAVMDKDPILAVLNSAYTNHSAEAVSITRPHAGAQELIFSKLLRETGIHPHDVSYIEMHGTGTQAGDATEMSSVLRTFASDTSRLSNQTLHLGSAKSNVGHGESASGVTSLIKVLLMMKHNTIPPHCGIKGRINHRFPTDLRERNVFIASQPVAWNRPHAGSGKRRVFINNFSAAGGNSALLLEDAPAGEHPETKDPRSTHIVAVSAKSSTSLANNLKRLKDFVQDNIYNLDSLSKLSYTTTARRIHYPFRAAMTASSRDQLLQGIESVLLRDEMPKPCKGQKNIGFVFSGQGAQYAGMGRHLFQNNHTFRTQILACNRICLSQGFPSILEIFTQDVDMNSLEPLVFQLGTTCLQTSLVSFWKSLGVTPDFCIGHSLGEYAALQAAGVLSVSDTIYLTGIRARMLQEKCSAGSHAMLAVRAPLARVNALLDPGIHEVTCLNGPHDVVIGGRVADVEDLEKELAKEDIKAVKVSVPFAFHSTQVDPILGEFCAAARGVPFQTQNIPVISTLLGEVVQPETTGVFGPEYLKRHCREPVNFAAAVQAGRDANLIHAGTVFVEIGPHPVCLALLKSNMGPDAVTLASLHRKDDGWKVLADTLAALYRSGLKINWDELHRDFASCQEVLPLPSYSWDNKNYWIQYVHNWTLTKGDEPAAVAEATALQAPDICTSSVQKIIQQTDGPGSLVTIVAQSDFGSARLAEVAQGHKVNGEMLCTSSLYAEIGMTLGRQLLEKHRPDLQGYSTEIQDMSVDKPLILKDQNKQTLFRAEVVHDKSTHTAAMSIYSVDSAGNKTVDHARCLLCFADPNSWLDEWERTYYLIDRSVRWLEARAEQGTDSLLSKGIVYKLFSSLVDYSPSFKGLQEVILNSGDREATAKVRLQAEKGDFGCNPMWIDSFGQLTGFLMNGHDFTGKDEVFINHGWRSMRCAKPFRKDAVYRTYIRMQHVEKTKYRGDLYIIEDGVIIGVFGGMTFLGMSRSLLNKVLPPRRGAEAINTPHPVAAAQEGMAASAKDTERRPLDIPTRAQRQPNSPPTGTLGRILAILSEEVGLSLETLTDDLVFADYGVDSLLSLTITGRIREELDLDMDSSIFTHYSTLGELKEFLGADQNPDDAVACESSNGQHTPQTSDKGSGTLAAQKPDDDTGSDTTLHRVCAIIAEEVGISVQELSSSQDFQELGIDSLSSLTILSRVREELQLDLESDFFDTHPSFCSLQKALCGTEAASNGAPEANETTPSSHRLESDLRTITWHSGQNIVASPPHATSILVSGSPSTARMILVLFPDGSGSAASYGALAPKIRRDIAVYALNCPWRTNGEEILRLGVSLDQMVAKHLVEVGRILDRHQHCRAGSGNASVGLALGGWSAGGILALEAVRQLREAGVAVQKMVLLDAPNPIGLQNPPPRMFHFLDELGILGAGKGKAPAWVLRHFDAMVTLLKSYRPRRLGAEDAPKCLIVYARDGICKDPDGPRMDTKPDDAREMLWLLYNRVDFSAEGWKSLVGQQNLAVGVVEDVNHFSMMNPGPKMAEMGDLIGEFLLGPS</sequence>
<reference key="1">
    <citation type="journal article" date="2014" name="Proc. Natl. Acad. Sci. U.S.A.">
        <title>Trajectory and genomic determinants of fungal-pathogen speciation and host adaptation.</title>
        <authorList>
            <person name="Hu X."/>
            <person name="Xiao G."/>
            <person name="Zheng P."/>
            <person name="Shang Y."/>
            <person name="Su Y."/>
            <person name="Zhang X."/>
            <person name="Liu X."/>
            <person name="Zhan S."/>
            <person name="St Leger R.J."/>
            <person name="Wang C."/>
        </authorList>
    </citation>
    <scope>NUCLEOTIDE SEQUENCE [LARGE SCALE GENOMIC DNA]</scope>
    <source>
        <strain>ARSEF 977</strain>
    </source>
</reference>
<reference key="2">
    <citation type="journal article" date="2018" name="PLoS Genet.">
        <title>Duplication of a Pks gene cluster and subsequent functional diversification facilitate environmental adaptation in Metarhizium species.</title>
        <authorList>
            <person name="Zeng G."/>
            <person name="Zhang P."/>
            <person name="Zhang Q."/>
            <person name="Zhao H."/>
            <person name="Li Z."/>
            <person name="Zhang X."/>
            <person name="Wang C."/>
            <person name="Yin W.B."/>
            <person name="Fang W."/>
        </authorList>
    </citation>
    <scope>IDENTIFICATION</scope>
    <scope>FUNCTION</scope>
    <scope>INDUCTION</scope>
    <scope>DOMAIN</scope>
</reference>
<comment type="function">
    <text evidence="10">Polyketide synthase; part of the Pks2 gene cluster that mediates the formation of infectious structures (appressoria), enabling these fungi to kill insects faster (Probable). The product of the Pks2 gene cluster is different from the one of Pks1 and has still not been identified (Probable).</text>
</comment>
<comment type="induction">
    <text evidence="8">Expression is up-regulated in appressoria-forming germlings on locust cuticle.</text>
</comment>
<comment type="domain">
    <text evidence="10">Multidomain protein; including a starter unit:ACP transacylase (SAT) that selects the starter unit; a ketosynthase (KS) that catalyzes repeated decarboxylative condensation to elongate the polyketide backbone; a malonyl-CoA:ACP transacylase (MAT) that selects and transfers the extender unit malonyl-CoA; a product template (PT) domain that controls the immediate cyclization regioselectivity of the reactive polyketide backbone; and an acyl-carrier protein (ACP) that serves as the tether of the growing and completed polyketide via its phosphopantetheinyl arm.</text>
</comment>
<comment type="domain">
    <text evidence="10">The release of the polyketide chain from the non-reducing polyketide synthase is mediated by the thioesterase (TE) domain localized at the C-ter of the protein.</text>
</comment>
<name>PKS2_METGA</name>
<evidence type="ECO:0000250" key="1">
    <source>
        <dbReference type="UniProtKB" id="Q03149"/>
    </source>
</evidence>
<evidence type="ECO:0000255" key="2"/>
<evidence type="ECO:0000255" key="3">
    <source>
        <dbReference type="PROSITE-ProRule" id="PRU00258"/>
    </source>
</evidence>
<evidence type="ECO:0000255" key="4">
    <source>
        <dbReference type="PROSITE-ProRule" id="PRU01348"/>
    </source>
</evidence>
<evidence type="ECO:0000255" key="5">
    <source>
        <dbReference type="PROSITE-ProRule" id="PRU01363"/>
    </source>
</evidence>
<evidence type="ECO:0000255" key="6">
    <source>
        <dbReference type="PROSITE-ProRule" id="PRU10022"/>
    </source>
</evidence>
<evidence type="ECO:0000256" key="7">
    <source>
        <dbReference type="SAM" id="MobiDB-lite"/>
    </source>
</evidence>
<evidence type="ECO:0000269" key="8">
    <source>
    </source>
</evidence>
<evidence type="ECO:0000303" key="9">
    <source>
    </source>
</evidence>
<evidence type="ECO:0000305" key="10">
    <source>
    </source>
</evidence>
<feature type="chain" id="PRO_0000445750" description="Polyketide synthase 2">
    <location>
        <begin position="1"/>
        <end position="2157"/>
    </location>
</feature>
<feature type="domain" description="Ketosynthase family 3 (KS3)" evidence="4 10">
    <location>
        <begin position="374"/>
        <end position="807"/>
    </location>
</feature>
<feature type="domain" description="PKS/mFAS DH" evidence="5">
    <location>
        <begin position="1294"/>
        <end position="1600"/>
    </location>
</feature>
<feature type="domain" description="Carrier 1" evidence="3 10">
    <location>
        <begin position="1649"/>
        <end position="1726"/>
    </location>
</feature>
<feature type="domain" description="Carrier 2" evidence="3 10">
    <location>
        <begin position="1765"/>
        <end position="1839"/>
    </location>
</feature>
<feature type="region of interest" description="N-terminal acylcarrier protein transacylase domain (SAT)" evidence="2 10">
    <location>
        <begin position="7"/>
        <end position="244"/>
    </location>
</feature>
<feature type="region of interest" description="Malonyl-CoA:ACP transacylase (MAT) domain" evidence="2 10">
    <location>
        <begin position="908"/>
        <end position="1213"/>
    </location>
</feature>
<feature type="region of interest" description="Product template (PT) domain" evidence="2 10">
    <location>
        <begin position="1290"/>
        <end position="1605"/>
    </location>
</feature>
<feature type="region of interest" description="N-terminal hotdog fold" evidence="5">
    <location>
        <begin position="1294"/>
        <end position="1428"/>
    </location>
</feature>
<feature type="region of interest" description="C-terminal hotdog fold" evidence="5">
    <location>
        <begin position="1455"/>
        <end position="1600"/>
    </location>
</feature>
<feature type="region of interest" description="Disordered" evidence="7">
    <location>
        <begin position="1629"/>
        <end position="1653"/>
    </location>
</feature>
<feature type="region of interest" description="Disordered" evidence="7">
    <location>
        <begin position="1729"/>
        <end position="1765"/>
    </location>
</feature>
<feature type="region of interest" description="Thioesterase (TE) domain" evidence="2 10">
    <location>
        <begin position="1875"/>
        <end position="2151"/>
    </location>
</feature>
<feature type="compositionally biased region" description="Polar residues" evidence="7">
    <location>
        <begin position="1735"/>
        <end position="1749"/>
    </location>
</feature>
<feature type="active site" description="For beta-ketoacyl synthase activity" evidence="4">
    <location>
        <position position="546"/>
    </location>
</feature>
<feature type="active site" description="For beta-ketoacyl synthase activity" evidence="4">
    <location>
        <position position="681"/>
    </location>
</feature>
<feature type="active site" description="For beta-ketoacyl synthase activity" evidence="4">
    <location>
        <position position="723"/>
    </location>
</feature>
<feature type="active site" description="For acyl/malonyl transferase activity" evidence="6">
    <location>
        <position position="998"/>
    </location>
</feature>
<feature type="active site" description="Proton acceptor; for dehydratase activity" evidence="5">
    <location>
        <position position="1327"/>
    </location>
</feature>
<feature type="active site" description="Proton donor; for dehydratase activity" evidence="5">
    <location>
        <position position="1514"/>
    </location>
</feature>
<feature type="active site" description="For thioesterase activity" evidence="1">
    <location>
        <position position="1981"/>
    </location>
</feature>
<feature type="modified residue" description="O-(pantetheine 4'-phosphoryl)serine" evidence="3">
    <location>
        <position position="1686"/>
    </location>
</feature>
<feature type="modified residue" description="O-(pantetheine 4'-phosphoryl)serine" evidence="3">
    <location>
        <position position="1799"/>
    </location>
</feature>
<gene>
    <name evidence="9" type="primary">Pks2</name>
    <name type="ORF">MGU_06677</name>
</gene>
<organism>
    <name type="scientific">Metarhizium guizhouense (strain ARSEF 977)</name>
    <dbReference type="NCBI Taxonomy" id="1276136"/>
    <lineage>
        <taxon>Eukaryota</taxon>
        <taxon>Fungi</taxon>
        <taxon>Dikarya</taxon>
        <taxon>Ascomycota</taxon>
        <taxon>Pezizomycotina</taxon>
        <taxon>Sordariomycetes</taxon>
        <taxon>Hypocreomycetidae</taxon>
        <taxon>Hypocreales</taxon>
        <taxon>Clavicipitaceae</taxon>
        <taxon>Metarhizium</taxon>
    </lineage>
</organism>
<protein>
    <recommendedName>
        <fullName evidence="9">Polyketide synthase 2</fullName>
        <ecNumber evidence="10">2.3.1.-</ecNumber>
    </recommendedName>
</protein>
<dbReference type="EC" id="2.3.1.-" evidence="10"/>
<dbReference type="EMBL" id="AZNH01000023">
    <property type="protein sequence ID" value="KID86244.1"/>
    <property type="molecule type" value="Genomic_DNA"/>
</dbReference>
<dbReference type="SMR" id="A0A0B4I1L1"/>
<dbReference type="ESTHER" id="metmf-pks2">
    <property type="family name" value="Thioesterase"/>
</dbReference>
<dbReference type="HOGENOM" id="CLU_000022_6_0_1"/>
<dbReference type="OrthoDB" id="4110at5529"/>
<dbReference type="Proteomes" id="UP000031192">
    <property type="component" value="Unassembled WGS sequence"/>
</dbReference>
<dbReference type="GO" id="GO:0004315">
    <property type="term" value="F:3-oxoacyl-[acyl-carrier-protein] synthase activity"/>
    <property type="evidence" value="ECO:0007669"/>
    <property type="project" value="InterPro"/>
</dbReference>
<dbReference type="GO" id="GO:0004312">
    <property type="term" value="F:fatty acid synthase activity"/>
    <property type="evidence" value="ECO:0007669"/>
    <property type="project" value="TreeGrafter"/>
</dbReference>
<dbReference type="GO" id="GO:0031177">
    <property type="term" value="F:phosphopantetheine binding"/>
    <property type="evidence" value="ECO:0007669"/>
    <property type="project" value="InterPro"/>
</dbReference>
<dbReference type="GO" id="GO:0006633">
    <property type="term" value="P:fatty acid biosynthetic process"/>
    <property type="evidence" value="ECO:0007669"/>
    <property type="project" value="InterPro"/>
</dbReference>
<dbReference type="GO" id="GO:0046189">
    <property type="term" value="P:phenol-containing compound biosynthetic process"/>
    <property type="evidence" value="ECO:0007669"/>
    <property type="project" value="UniProtKB-ARBA"/>
</dbReference>
<dbReference type="GO" id="GO:0030639">
    <property type="term" value="P:polyketide biosynthetic process"/>
    <property type="evidence" value="ECO:0007669"/>
    <property type="project" value="UniProtKB-ARBA"/>
</dbReference>
<dbReference type="GO" id="GO:0009403">
    <property type="term" value="P:toxin biosynthetic process"/>
    <property type="evidence" value="ECO:0007669"/>
    <property type="project" value="UniProtKB-ARBA"/>
</dbReference>
<dbReference type="CDD" id="cd00833">
    <property type="entry name" value="PKS"/>
    <property type="match status" value="1"/>
</dbReference>
<dbReference type="FunFam" id="3.40.366.10:FF:000002">
    <property type="entry name" value="Probable polyketide synthase 2"/>
    <property type="match status" value="1"/>
</dbReference>
<dbReference type="FunFam" id="1.10.1200.10:FF:000011">
    <property type="entry name" value="Sterigmatocystin biosynthesis polyketide synthase"/>
    <property type="match status" value="2"/>
</dbReference>
<dbReference type="FunFam" id="3.10.129.110:FF:000001">
    <property type="entry name" value="Sterigmatocystin biosynthesis polyketide synthase"/>
    <property type="match status" value="1"/>
</dbReference>
<dbReference type="FunFam" id="3.40.47.10:FF:000031">
    <property type="entry name" value="Sterigmatocystin biosynthesis polyketide synthase"/>
    <property type="match status" value="1"/>
</dbReference>
<dbReference type="Gene3D" id="3.30.70.3290">
    <property type="match status" value="1"/>
</dbReference>
<dbReference type="Gene3D" id="3.40.47.10">
    <property type="match status" value="1"/>
</dbReference>
<dbReference type="Gene3D" id="1.10.1200.10">
    <property type="entry name" value="ACP-like"/>
    <property type="match status" value="2"/>
</dbReference>
<dbReference type="Gene3D" id="3.40.50.1820">
    <property type="entry name" value="alpha/beta hydrolase"/>
    <property type="match status" value="1"/>
</dbReference>
<dbReference type="Gene3D" id="3.40.366.10">
    <property type="entry name" value="Malonyl-Coenzyme A Acyl Carrier Protein, domain 2"/>
    <property type="match status" value="2"/>
</dbReference>
<dbReference type="Gene3D" id="3.10.129.110">
    <property type="entry name" value="Polyketide synthase dehydratase"/>
    <property type="match status" value="1"/>
</dbReference>
<dbReference type="InterPro" id="IPR029058">
    <property type="entry name" value="AB_hydrolase_fold"/>
</dbReference>
<dbReference type="InterPro" id="IPR001227">
    <property type="entry name" value="Ac_transferase_dom_sf"/>
</dbReference>
<dbReference type="InterPro" id="IPR036736">
    <property type="entry name" value="ACP-like_sf"/>
</dbReference>
<dbReference type="InterPro" id="IPR014043">
    <property type="entry name" value="Acyl_transferase_dom"/>
</dbReference>
<dbReference type="InterPro" id="IPR016035">
    <property type="entry name" value="Acyl_Trfase/lysoPLipase"/>
</dbReference>
<dbReference type="InterPro" id="IPR018201">
    <property type="entry name" value="Ketoacyl_synth_AS"/>
</dbReference>
<dbReference type="InterPro" id="IPR014031">
    <property type="entry name" value="Ketoacyl_synth_C"/>
</dbReference>
<dbReference type="InterPro" id="IPR014030">
    <property type="entry name" value="Ketoacyl_synth_N"/>
</dbReference>
<dbReference type="InterPro" id="IPR016036">
    <property type="entry name" value="Malonyl_transacylase_ACP-bd"/>
</dbReference>
<dbReference type="InterPro" id="IPR020841">
    <property type="entry name" value="PKS_Beta-ketoAc_synthase_dom"/>
</dbReference>
<dbReference type="InterPro" id="IPR042104">
    <property type="entry name" value="PKS_dehydratase_sf"/>
</dbReference>
<dbReference type="InterPro" id="IPR049551">
    <property type="entry name" value="PKS_DH_C"/>
</dbReference>
<dbReference type="InterPro" id="IPR049900">
    <property type="entry name" value="PKS_mFAS_DH"/>
</dbReference>
<dbReference type="InterPro" id="IPR050091">
    <property type="entry name" value="PKS_NRPS_Biosynth_Enz"/>
</dbReference>
<dbReference type="InterPro" id="IPR020806">
    <property type="entry name" value="PKS_PP-bd"/>
</dbReference>
<dbReference type="InterPro" id="IPR009081">
    <property type="entry name" value="PP-bd_ACP"/>
</dbReference>
<dbReference type="InterPro" id="IPR006162">
    <property type="entry name" value="Ppantetheine_attach_site"/>
</dbReference>
<dbReference type="InterPro" id="IPR030918">
    <property type="entry name" value="PT_fungal_PKS"/>
</dbReference>
<dbReference type="InterPro" id="IPR032088">
    <property type="entry name" value="SAT"/>
</dbReference>
<dbReference type="InterPro" id="IPR001031">
    <property type="entry name" value="Thioesterase"/>
</dbReference>
<dbReference type="InterPro" id="IPR016039">
    <property type="entry name" value="Thiolase-like"/>
</dbReference>
<dbReference type="NCBIfam" id="TIGR04532">
    <property type="entry name" value="PT_fungal_PKS"/>
    <property type="match status" value="1"/>
</dbReference>
<dbReference type="PANTHER" id="PTHR43775:SF45">
    <property type="entry name" value="CONIDIAL PIGMENT POLYKETIDE SYNTHASE ALB1"/>
    <property type="match status" value="1"/>
</dbReference>
<dbReference type="PANTHER" id="PTHR43775">
    <property type="entry name" value="FATTY ACID SYNTHASE"/>
    <property type="match status" value="1"/>
</dbReference>
<dbReference type="Pfam" id="PF00698">
    <property type="entry name" value="Acyl_transf_1"/>
    <property type="match status" value="1"/>
</dbReference>
<dbReference type="Pfam" id="PF22621">
    <property type="entry name" value="CurL-like_PKS_C"/>
    <property type="match status" value="1"/>
</dbReference>
<dbReference type="Pfam" id="PF00109">
    <property type="entry name" value="ketoacyl-synt"/>
    <property type="match status" value="1"/>
</dbReference>
<dbReference type="Pfam" id="PF02801">
    <property type="entry name" value="Ketoacyl-synt_C"/>
    <property type="match status" value="1"/>
</dbReference>
<dbReference type="Pfam" id="PF00550">
    <property type="entry name" value="PP-binding"/>
    <property type="match status" value="2"/>
</dbReference>
<dbReference type="Pfam" id="PF14765">
    <property type="entry name" value="PS-DH"/>
    <property type="match status" value="1"/>
</dbReference>
<dbReference type="Pfam" id="PF16073">
    <property type="entry name" value="SAT"/>
    <property type="match status" value="1"/>
</dbReference>
<dbReference type="Pfam" id="PF00975">
    <property type="entry name" value="Thioesterase"/>
    <property type="match status" value="1"/>
</dbReference>
<dbReference type="SMART" id="SM00827">
    <property type="entry name" value="PKS_AT"/>
    <property type="match status" value="1"/>
</dbReference>
<dbReference type="SMART" id="SM00825">
    <property type="entry name" value="PKS_KS"/>
    <property type="match status" value="1"/>
</dbReference>
<dbReference type="SMART" id="SM00823">
    <property type="entry name" value="PKS_PP"/>
    <property type="match status" value="2"/>
</dbReference>
<dbReference type="SUPFAM" id="SSF47336">
    <property type="entry name" value="ACP-like"/>
    <property type="match status" value="2"/>
</dbReference>
<dbReference type="SUPFAM" id="SSF53474">
    <property type="entry name" value="alpha/beta-Hydrolases"/>
    <property type="match status" value="1"/>
</dbReference>
<dbReference type="SUPFAM" id="SSF52151">
    <property type="entry name" value="FabD/lysophospholipase-like"/>
    <property type="match status" value="1"/>
</dbReference>
<dbReference type="SUPFAM" id="SSF55048">
    <property type="entry name" value="Probable ACP-binding domain of malonyl-CoA ACP transacylase"/>
    <property type="match status" value="1"/>
</dbReference>
<dbReference type="SUPFAM" id="SSF53901">
    <property type="entry name" value="Thiolase-like"/>
    <property type="match status" value="1"/>
</dbReference>
<dbReference type="PROSITE" id="PS50075">
    <property type="entry name" value="CARRIER"/>
    <property type="match status" value="2"/>
</dbReference>
<dbReference type="PROSITE" id="PS00606">
    <property type="entry name" value="KS3_1"/>
    <property type="match status" value="1"/>
</dbReference>
<dbReference type="PROSITE" id="PS52004">
    <property type="entry name" value="KS3_2"/>
    <property type="match status" value="1"/>
</dbReference>
<dbReference type="PROSITE" id="PS00012">
    <property type="entry name" value="PHOSPHOPANTETHEINE"/>
    <property type="match status" value="2"/>
</dbReference>
<dbReference type="PROSITE" id="PS52019">
    <property type="entry name" value="PKS_MFAS_DH"/>
    <property type="match status" value="1"/>
</dbReference>
<keyword id="KW-0511">Multifunctional enzyme</keyword>
<keyword id="KW-0596">Phosphopantetheine</keyword>
<keyword id="KW-0597">Phosphoprotein</keyword>
<keyword id="KW-0677">Repeat</keyword>
<keyword id="KW-0808">Transferase</keyword>